<name>CDC13_YEAST</name>
<protein>
    <recommendedName>
        <fullName>Cell division control protein 13</fullName>
    </recommendedName>
</protein>
<sequence length="924" mass="104904">MDTLEEPECPPHKNRIFVSSSKDFEGYPSKAIVPVQFVALLTSIHLTETKCLLGFSNFERRGDQSQEDQYLIKLKFKDRGSERLARITISLLCQYFDIELPDLDSDSGASPTVILRDIHLERLCFSSCKALYVSKHGNYTLFLEDIKPLDLVSVISTISTKSTNSSKHSSSELISECDLNNSLVDIFNNLIEMNRDEKNRFKFVKLIHYDIELKKFVQDQQKVLSQKSKAAAINPFFVPNRLGIPYIESQNEFNSQLMTLNVDEPTTDISNMGEEMHDSADPIEDSDSSTTSSTGKYFSSKSYIQSQTPERKTSVPNNWHDDDSGSKRKRKLSFHSPNASSIRKAISYEQLSLASVGSVERLEGKIVGMNPPQFASINEFKYCTLKLYFTQLLPNVPDKVLVPGVNCIEIVIPTRERICELFGVLNCQSDKISDILLLEKPDRISVEVERILWDNDKTASPGMAVWSLKNISTDTQAQAQVQVPAQSSASIDPSRTRMSKMARKDPTIEFCQLGLDTFETKYITMFGMLVSCSFDKPAFISFVFSDFTKNDIVQNYLYDRYLIDYENKLELNEGFKAIMYKNQFETFDSKLRKIFNNGLRDLQNGRDENLSQYGIVCKMNIKVKMYNGKLNAIVRECEPVPHSQISSIASPSQCEHLRLFYQRAFKRIGESAISRYFEEYRRFFPIHRNGSHLAKLRFDEVKHEPKKSPTTPALAEHIPDLNADVSSFDVKFTDISSLLDSSARLPRPQQTHKSNTLYSCEGRIIAIEYHASDLCFHITNELPLLQTRGLAPERVLQLHIITSKNFAYFFNRSSAYLQRQPLEEKYTQLAQFLGHSFKFNITSSLTLFPDTTVALQIWCPIECTFRELQQQLAHPKVAAAPDSGSLDCAINATVNPLRLLAAQNGVTVKKEEDNDDDAGAVPTS</sequence>
<gene>
    <name type="primary">CDC13</name>
    <name type="ordered locus">YDL220C</name>
</gene>
<evidence type="ECO:0000256" key="1">
    <source>
        <dbReference type="SAM" id="MobiDB-lite"/>
    </source>
</evidence>
<evidence type="ECO:0000269" key="2">
    <source>
    </source>
</evidence>
<evidence type="ECO:0000269" key="3">
    <source>
    </source>
</evidence>
<evidence type="ECO:0000269" key="4">
    <source>
    </source>
</evidence>
<evidence type="ECO:0000269" key="5">
    <source>
    </source>
</evidence>
<evidence type="ECO:0000269" key="6">
    <source>
    </source>
</evidence>
<evidence type="ECO:0000269" key="7">
    <source>
    </source>
</evidence>
<evidence type="ECO:0000269" key="8">
    <source>
    </source>
</evidence>
<evidence type="ECO:0000269" key="9">
    <source>
    </source>
</evidence>
<evidence type="ECO:0000305" key="10"/>
<evidence type="ECO:0007744" key="11">
    <source>
    </source>
</evidence>
<evidence type="ECO:0007744" key="12">
    <source>
    </source>
</evidence>
<evidence type="ECO:0007829" key="13">
    <source>
        <dbReference type="PDB" id="1KXL"/>
    </source>
</evidence>
<evidence type="ECO:0007829" key="14">
    <source>
        <dbReference type="PDB" id="3NWT"/>
    </source>
</evidence>
<evidence type="ECO:0007829" key="15">
    <source>
        <dbReference type="PDB" id="3OIQ"/>
    </source>
</evidence>
<evidence type="ECO:0007829" key="16">
    <source>
        <dbReference type="PDB" id="4HCE"/>
    </source>
</evidence>
<accession>P32797</accession>
<accession>D6VRD4</accession>
<accession>Q07650</accession>
<comment type="function">
    <text evidence="2 4 5">Single-stranded telomeric DNA-binding protein that regulates telomere replication. Has a role in both positive and negative regulation. Promotes [TG(1-3)] strand lengthening via interaction with EST1. Promotes [C(1-3)A] strand re-synthesis by DNA polymerase alpha via interaction with POL1. Negatively regulates telomere elongation of the G strand via binding with STN1 thereby inhibiting telomerase activity.</text>
</comment>
<comment type="subunit">
    <text evidence="2 3 4 5 6 7 9">Interacts with POL1, EST1, FUN12, STM1, STN1 and TEN1.</text>
</comment>
<comment type="interaction">
    <interactant intactId="EBI-4187">
        <id>P32797</id>
    </interactant>
    <interactant intactId="EBI-4187">
        <id>P32797</id>
        <label>CDC13</label>
    </interactant>
    <organismsDiffer>false</organismsDiffer>
    <experiments>4</experiments>
</comment>
<comment type="interaction">
    <interactant intactId="EBI-4187">
        <id>P32797</id>
    </interactant>
    <interactant intactId="EBI-6684">
        <id>P17214</id>
        <label>EST1</label>
    </interactant>
    <organismsDiffer>false</organismsDiffer>
    <experiments>3</experiments>
</comment>
<comment type="interaction">
    <interactant intactId="EBI-4187">
        <id>P32797</id>
    </interactant>
    <interactant intactId="EBI-6128">
        <id>P13382</id>
        <label>POL1</label>
    </interactant>
    <organismsDiffer>false</organismsDiffer>
    <experiments>4</experiments>
</comment>
<comment type="interaction">
    <interactant intactId="EBI-4187">
        <id>P32797</id>
    </interactant>
    <interactant intactId="EBI-17490">
        <id>Q12306</id>
        <label>SMT3</label>
    </interactant>
    <organismsDiffer>false</organismsDiffer>
    <experiments>3</experiments>
</comment>
<comment type="interaction">
    <interactant intactId="EBI-4187">
        <id>P32797</id>
    </interactant>
    <interactant intactId="EBI-18427">
        <id>P38960</id>
        <label>STN1</label>
    </interactant>
    <organismsDiffer>false</organismsDiffer>
    <experiments>10</experiments>
</comment>
<comment type="subcellular location">
    <subcellularLocation>
        <location>Chromosome</location>
        <location>Telomere</location>
    </subcellularLocation>
</comment>
<comment type="miscellaneous">
    <text evidence="8">Present with 319 molecules/cell in log phase SD medium.</text>
</comment>
<feature type="chain" id="PRO_0000089441" description="Cell division control protein 13">
    <location>
        <begin position="1"/>
        <end position="924"/>
    </location>
</feature>
<feature type="DNA-binding region" description="OB">
    <location>
        <begin position="500"/>
        <end position="686"/>
    </location>
</feature>
<feature type="region of interest" description="Disordered" evidence="1">
    <location>
        <begin position="265"/>
        <end position="336"/>
    </location>
</feature>
<feature type="compositionally biased region" description="Polar residues" evidence="1">
    <location>
        <begin position="295"/>
        <end position="308"/>
    </location>
</feature>
<feature type="compositionally biased region" description="Basic and acidic residues" evidence="1">
    <location>
        <begin position="309"/>
        <end position="326"/>
    </location>
</feature>
<feature type="modified residue" description="Phosphoserine" evidence="12">
    <location>
        <position position="306"/>
    </location>
</feature>
<feature type="modified residue" description="Phosphothreonine" evidence="12">
    <location>
        <position position="308"/>
    </location>
</feature>
<feature type="modified residue" description="Phosphoserine" evidence="11">
    <location>
        <position position="333"/>
    </location>
</feature>
<feature type="mutagenesis site" description="Increase in length of X' and Y' telomeres. Disrupts interaction with POL1 but not FUN12." evidence="2">
    <original>K</original>
    <variation>Q</variation>
    <location>
        <position position="50"/>
    </location>
</feature>
<feature type="mutagenesis site" description="Disrupts interaction with POL1 and FUN12." evidence="2">
    <original>I</original>
    <variation>T</variation>
    <location>
        <position position="72"/>
    </location>
</feature>
<feature type="mutagenesis site" description="Disrupts interaction with POL1 but not FUN12." evidence="2">
    <original>C</original>
    <variation>R</variation>
    <location>
        <position position="124"/>
    </location>
</feature>
<feature type="mutagenesis site" description="Disrupts interaction with POL1 but not FUN12." evidence="2">
    <original>L</original>
    <variation>S</variation>
    <location>
        <position position="149"/>
    </location>
</feature>
<feature type="mutagenesis site" description="Disrupts interaction with POL1 but not FUN12." evidence="2">
    <original>S</original>
    <variation>P</variation>
    <location>
        <position position="228"/>
    </location>
</feature>
<feature type="mutagenesis site" description="Disrupts interaction with POL1 and FUN12." evidence="2">
    <original>G</original>
    <variation>R</variation>
    <location>
        <position position="243"/>
    </location>
</feature>
<feature type="mutagenesis site" description="Disrupts interaction with POL1 but not FUN12." evidence="2">
    <original>L</original>
    <variation>P</variation>
    <location>
        <position position="392"/>
    </location>
</feature>
<feature type="mutagenesis site" description="Increase in length of X' and Y' telomeres. Disrupts interaction with POL1 but not FUN12." evidence="2">
    <original>I</original>
    <variation>V</variation>
    <location>
        <position position="523"/>
    </location>
</feature>
<feature type="sequence conflict" description="In Ref. 1; AAA99990." evidence="10" ref="1">
    <original>L</original>
    <variation>A</variation>
    <location>
        <position position="40"/>
    </location>
</feature>
<feature type="helix" evidence="15">
    <location>
        <begin position="21"/>
        <end position="25"/>
    </location>
</feature>
<feature type="strand" evidence="15">
    <location>
        <begin position="32"/>
        <end position="46"/>
    </location>
</feature>
<feature type="strand" evidence="15">
    <location>
        <begin position="48"/>
        <end position="56"/>
    </location>
</feature>
<feature type="strand" evidence="14">
    <location>
        <begin position="62"/>
        <end position="64"/>
    </location>
</feature>
<feature type="strand" evidence="15">
    <location>
        <begin position="70"/>
        <end position="75"/>
    </location>
</feature>
<feature type="helix" evidence="15">
    <location>
        <begin position="79"/>
        <end position="95"/>
    </location>
</feature>
<feature type="strand" evidence="15">
    <location>
        <begin position="113"/>
        <end position="115"/>
    </location>
</feature>
<feature type="helix" evidence="15">
    <location>
        <begin position="118"/>
        <end position="120"/>
    </location>
</feature>
<feature type="strand" evidence="15">
    <location>
        <begin position="125"/>
        <end position="135"/>
    </location>
</feature>
<feature type="strand" evidence="15">
    <location>
        <begin position="138"/>
        <end position="148"/>
    </location>
</feature>
<feature type="helix" evidence="15">
    <location>
        <begin position="151"/>
        <end position="160"/>
    </location>
</feature>
<feature type="helix" evidence="15">
    <location>
        <begin position="178"/>
        <end position="195"/>
    </location>
</feature>
<feature type="strand" evidence="15">
    <location>
        <begin position="197"/>
        <end position="200"/>
    </location>
</feature>
<feature type="helix" evidence="15">
    <location>
        <begin position="203"/>
        <end position="205"/>
    </location>
</feature>
<feature type="helix" evidence="15">
    <location>
        <begin position="211"/>
        <end position="221"/>
    </location>
</feature>
<feature type="helix" evidence="16">
    <location>
        <begin position="348"/>
        <end position="352"/>
    </location>
</feature>
<feature type="strand" evidence="16">
    <location>
        <begin position="359"/>
        <end position="372"/>
    </location>
</feature>
<feature type="helix" evidence="16">
    <location>
        <begin position="377"/>
        <end position="380"/>
    </location>
</feature>
<feature type="strand" evidence="16">
    <location>
        <begin position="381"/>
        <end position="383"/>
    </location>
</feature>
<feature type="strand" evidence="16">
    <location>
        <begin position="385"/>
        <end position="390"/>
    </location>
</feature>
<feature type="strand" evidence="16">
    <location>
        <begin position="394"/>
        <end position="396"/>
    </location>
</feature>
<feature type="turn" evidence="16">
    <location>
        <begin position="403"/>
        <end position="405"/>
    </location>
</feature>
<feature type="strand" evidence="16">
    <location>
        <begin position="406"/>
        <end position="412"/>
    </location>
</feature>
<feature type="helix" evidence="16">
    <location>
        <begin position="415"/>
        <end position="422"/>
    </location>
</feature>
<feature type="helix" evidence="16">
    <location>
        <begin position="424"/>
        <end position="426"/>
    </location>
</feature>
<feature type="helix" evidence="16">
    <location>
        <begin position="429"/>
        <end position="436"/>
    </location>
</feature>
<feature type="turn" evidence="16">
    <location>
        <begin position="437"/>
        <end position="439"/>
    </location>
</feature>
<feature type="strand" evidence="16">
    <location>
        <begin position="444"/>
        <end position="453"/>
    </location>
</feature>
<feature type="strand" evidence="16">
    <location>
        <begin position="463"/>
        <end position="472"/>
    </location>
</feature>
<feature type="turn" evidence="13">
    <location>
        <begin position="510"/>
        <end position="512"/>
    </location>
</feature>
<feature type="strand" evidence="13">
    <location>
        <begin position="521"/>
        <end position="525"/>
    </location>
</feature>
<feature type="strand" evidence="13">
    <location>
        <begin position="531"/>
        <end position="533"/>
    </location>
</feature>
<feature type="strand" evidence="13">
    <location>
        <begin position="539"/>
        <end position="544"/>
    </location>
</feature>
<feature type="strand" evidence="13">
    <location>
        <begin position="565"/>
        <end position="567"/>
    </location>
</feature>
<feature type="turn" evidence="13">
    <location>
        <begin position="571"/>
        <end position="573"/>
    </location>
</feature>
<feature type="strand" evidence="13">
    <location>
        <begin position="575"/>
        <end position="580"/>
    </location>
</feature>
<feature type="helix" evidence="13">
    <location>
        <begin position="581"/>
        <end position="592"/>
    </location>
</feature>
<feature type="strand" evidence="13">
    <location>
        <begin position="595"/>
        <end position="597"/>
    </location>
</feature>
<feature type="helix" evidence="13">
    <location>
        <begin position="599"/>
        <end position="602"/>
    </location>
</feature>
<feature type="strand" evidence="13">
    <location>
        <begin position="617"/>
        <end position="624"/>
    </location>
</feature>
<feature type="strand" evidence="13">
    <location>
        <begin position="626"/>
        <end position="629"/>
    </location>
</feature>
<feature type="strand" evidence="13">
    <location>
        <begin position="631"/>
        <end position="634"/>
    </location>
</feature>
<feature type="strand" evidence="13">
    <location>
        <begin position="642"/>
        <end position="644"/>
    </location>
</feature>
<feature type="helix" evidence="13">
    <location>
        <begin position="645"/>
        <end position="648"/>
    </location>
</feature>
<feature type="helix" evidence="13">
    <location>
        <begin position="653"/>
        <end position="668"/>
    </location>
</feature>
<feature type="helix" evidence="13">
    <location>
        <begin position="670"/>
        <end position="675"/>
    </location>
</feature>
<feature type="helix" evidence="13">
    <location>
        <begin position="677"/>
        <end position="680"/>
    </location>
</feature>
<keyword id="KW-0002">3D-structure</keyword>
<keyword id="KW-0131">Cell cycle</keyword>
<keyword id="KW-0132">Cell division</keyword>
<keyword id="KW-0158">Chromosome</keyword>
<keyword id="KW-0238">DNA-binding</keyword>
<keyword id="KW-0597">Phosphoprotein</keyword>
<keyword id="KW-1185">Reference proteome</keyword>
<keyword id="KW-0779">Telomere</keyword>
<organism>
    <name type="scientific">Saccharomyces cerevisiae (strain ATCC 204508 / S288c)</name>
    <name type="common">Baker's yeast</name>
    <dbReference type="NCBI Taxonomy" id="559292"/>
    <lineage>
        <taxon>Eukaryota</taxon>
        <taxon>Fungi</taxon>
        <taxon>Dikarya</taxon>
        <taxon>Ascomycota</taxon>
        <taxon>Saccharomycotina</taxon>
        <taxon>Saccharomycetes</taxon>
        <taxon>Saccharomycetales</taxon>
        <taxon>Saccharomycetaceae</taxon>
        <taxon>Saccharomyces</taxon>
    </lineage>
</organism>
<reference key="1">
    <citation type="journal article" date="1995" name="Mol. Cell. Biol.">
        <title>Single-stranded DNA arising at telomeres in cdc13 mutants may constitute a specific signal for the RAD9 checkpoint.</title>
        <authorList>
            <person name="Garvik B."/>
            <person name="Carson M."/>
            <person name="Hartwell L."/>
        </authorList>
    </citation>
    <scope>NUCLEOTIDE SEQUENCE [GENOMIC DNA]</scope>
</reference>
<reference key="2">
    <citation type="journal article" date="1997" name="Nature">
        <title>The nucleotide sequence of Saccharomyces cerevisiae chromosome IV.</title>
        <authorList>
            <person name="Jacq C."/>
            <person name="Alt-Moerbe J."/>
            <person name="Andre B."/>
            <person name="Arnold W."/>
            <person name="Bahr A."/>
            <person name="Ballesta J.P.G."/>
            <person name="Bargues M."/>
            <person name="Baron L."/>
            <person name="Becker A."/>
            <person name="Biteau N."/>
            <person name="Bloecker H."/>
            <person name="Blugeon C."/>
            <person name="Boskovic J."/>
            <person name="Brandt P."/>
            <person name="Brueckner M."/>
            <person name="Buitrago M.J."/>
            <person name="Coster F."/>
            <person name="Delaveau T."/>
            <person name="del Rey F."/>
            <person name="Dujon B."/>
            <person name="Eide L.G."/>
            <person name="Garcia-Cantalejo J.M."/>
            <person name="Goffeau A."/>
            <person name="Gomez-Peris A."/>
            <person name="Granotier C."/>
            <person name="Hanemann V."/>
            <person name="Hankeln T."/>
            <person name="Hoheisel J.D."/>
            <person name="Jaeger W."/>
            <person name="Jimenez A."/>
            <person name="Jonniaux J.-L."/>
            <person name="Kraemer C."/>
            <person name="Kuester H."/>
            <person name="Laamanen P."/>
            <person name="Legros Y."/>
            <person name="Louis E.J."/>
            <person name="Moeller-Rieker S."/>
            <person name="Monnet A."/>
            <person name="Moro M."/>
            <person name="Mueller-Auer S."/>
            <person name="Nussbaumer B."/>
            <person name="Paricio N."/>
            <person name="Paulin L."/>
            <person name="Perea J."/>
            <person name="Perez-Alonso M."/>
            <person name="Perez-Ortin J.E."/>
            <person name="Pohl T.M."/>
            <person name="Prydz H."/>
            <person name="Purnelle B."/>
            <person name="Rasmussen S.W."/>
            <person name="Remacha M.A."/>
            <person name="Revuelta J.L."/>
            <person name="Rieger M."/>
            <person name="Salom D."/>
            <person name="Saluz H.P."/>
            <person name="Saiz J.E."/>
            <person name="Saren A.-M."/>
            <person name="Schaefer M."/>
            <person name="Scharfe M."/>
            <person name="Schmidt E.R."/>
            <person name="Schneider C."/>
            <person name="Scholler P."/>
            <person name="Schwarz S."/>
            <person name="Soler-Mira A."/>
            <person name="Urrestarazu L.A."/>
            <person name="Verhasselt P."/>
            <person name="Vissers S."/>
            <person name="Voet M."/>
            <person name="Volckaert G."/>
            <person name="Wagner G."/>
            <person name="Wambutt R."/>
            <person name="Wedler E."/>
            <person name="Wedler H."/>
            <person name="Woelfl S."/>
            <person name="Harris D.E."/>
            <person name="Bowman S."/>
            <person name="Brown D."/>
            <person name="Churcher C.M."/>
            <person name="Connor R."/>
            <person name="Dedman K."/>
            <person name="Gentles S."/>
            <person name="Hamlin N."/>
            <person name="Hunt S."/>
            <person name="Jones L."/>
            <person name="McDonald S."/>
            <person name="Murphy L.D."/>
            <person name="Niblett D."/>
            <person name="Odell C."/>
            <person name="Oliver K."/>
            <person name="Rajandream M.A."/>
            <person name="Richards C."/>
            <person name="Shore L."/>
            <person name="Walsh S.V."/>
            <person name="Barrell B.G."/>
            <person name="Dietrich F.S."/>
            <person name="Mulligan J.T."/>
            <person name="Allen E."/>
            <person name="Araujo R."/>
            <person name="Aviles E."/>
            <person name="Berno A."/>
            <person name="Carpenter J."/>
            <person name="Chen E."/>
            <person name="Cherry J.M."/>
            <person name="Chung E."/>
            <person name="Duncan M."/>
            <person name="Hunicke-Smith S."/>
            <person name="Hyman R.W."/>
            <person name="Komp C."/>
            <person name="Lashkari D."/>
            <person name="Lew H."/>
            <person name="Lin D."/>
            <person name="Mosedale D."/>
            <person name="Nakahara K."/>
            <person name="Namath A."/>
            <person name="Oefner P."/>
            <person name="Oh C."/>
            <person name="Petel F.X."/>
            <person name="Roberts D."/>
            <person name="Schramm S."/>
            <person name="Schroeder M."/>
            <person name="Shogren T."/>
            <person name="Shroff N."/>
            <person name="Winant A."/>
            <person name="Yelton M.A."/>
            <person name="Botstein D."/>
            <person name="Davis R.W."/>
            <person name="Johnston M."/>
            <person name="Andrews S."/>
            <person name="Brinkman R."/>
            <person name="Cooper J."/>
            <person name="Ding H."/>
            <person name="Du Z."/>
            <person name="Favello A."/>
            <person name="Fulton L."/>
            <person name="Gattung S."/>
            <person name="Greco T."/>
            <person name="Hallsworth K."/>
            <person name="Hawkins J."/>
            <person name="Hillier L.W."/>
            <person name="Jier M."/>
            <person name="Johnson D."/>
            <person name="Johnston L."/>
            <person name="Kirsten J."/>
            <person name="Kucaba T."/>
            <person name="Langston Y."/>
            <person name="Latreille P."/>
            <person name="Le T."/>
            <person name="Mardis E."/>
            <person name="Menezes S."/>
            <person name="Miller N."/>
            <person name="Nhan M."/>
            <person name="Pauley A."/>
            <person name="Peluso D."/>
            <person name="Rifkin L."/>
            <person name="Riles L."/>
            <person name="Taich A."/>
            <person name="Trevaskis E."/>
            <person name="Vignati D."/>
            <person name="Wilcox L."/>
            <person name="Wohldman P."/>
            <person name="Vaudin M."/>
            <person name="Wilson R."/>
            <person name="Waterston R."/>
            <person name="Albermann K."/>
            <person name="Hani J."/>
            <person name="Heumann K."/>
            <person name="Kleine K."/>
            <person name="Mewes H.-W."/>
            <person name="Zollner A."/>
            <person name="Zaccaria P."/>
        </authorList>
    </citation>
    <scope>NUCLEOTIDE SEQUENCE [LARGE SCALE GENOMIC DNA]</scope>
    <source>
        <strain>ATCC 204508 / S288c</strain>
    </source>
</reference>
<reference key="3">
    <citation type="journal article" date="2014" name="G3 (Bethesda)">
        <title>The reference genome sequence of Saccharomyces cerevisiae: Then and now.</title>
        <authorList>
            <person name="Engel S.R."/>
            <person name="Dietrich F.S."/>
            <person name="Fisk D.G."/>
            <person name="Binkley G."/>
            <person name="Balakrishnan R."/>
            <person name="Costanzo M.C."/>
            <person name="Dwight S.S."/>
            <person name="Hitz B.C."/>
            <person name="Karra K."/>
            <person name="Nash R.S."/>
            <person name="Weng S."/>
            <person name="Wong E.D."/>
            <person name="Lloyd P."/>
            <person name="Skrzypek M.S."/>
            <person name="Miyasato S.R."/>
            <person name="Simison M."/>
            <person name="Cherry J.M."/>
        </authorList>
    </citation>
    <scope>GENOME REANNOTATION</scope>
    <source>
        <strain>ATCC 204508 / S288c</strain>
    </source>
</reference>
<reference key="4">
    <citation type="journal article" date="2001" name="EMBO J.">
        <title>Ten1 functions in telomere end protection and length regulation in association with Stn1 and Cdc13.</title>
        <authorList>
            <person name="Grandin N."/>
            <person name="Damon C."/>
            <person name="Charbonneau M."/>
        </authorList>
    </citation>
    <scope>INTERACTION WITH TEN1</scope>
</reference>
<reference key="5">
    <citation type="journal article" date="2001" name="Genes Dev.">
        <title>Cdc13 both positively and negatively regulates telomere replication.</title>
        <authorList>
            <person name="Chandra A."/>
            <person name="Hughes T.R."/>
            <person name="Nugent C.I."/>
            <person name="Lundblad V."/>
        </authorList>
    </citation>
    <scope>FUNCTION</scope>
    <scope>INTERACTION WITH STN1</scope>
</reference>
<reference key="6">
    <citation type="journal article" date="2001" name="Mol. Cell. Biol.">
        <title>New function of CDC13 in positive telomere length regulation.</title>
        <authorList>
            <person name="Meier B."/>
            <person name="Driller L."/>
            <person name="Jaklin S."/>
            <person name="Feldmann H.M."/>
        </authorList>
    </citation>
    <scope>FUNCTION</scope>
    <scope>INTERACTION WITH EST1</scope>
</reference>
<reference key="7">
    <citation type="journal article" date="2000" name="Genes Dev.">
        <title>The Saccharomyces telomere-binding protein Cdc13p interacts with both the catalytic subunit of DNA polymerase alpha and the telomerase-associated est1 protein.</title>
        <authorList>
            <person name="Qi H."/>
            <person name="Zakian V.A."/>
        </authorList>
    </citation>
    <scope>FUNCTION</scope>
    <scope>INTERACTION WITH EST1; FUN12 AND POL1</scope>
    <scope>MUTAGENESIS OF LYS-50; ILE-72; CYS-124; LEU-149; SER-228; GLY-243; LEU-392 AND ILE-523</scope>
</reference>
<reference key="8">
    <citation type="journal article" date="2002" name="Mol. Genet. Genomics">
        <title>STM1, a gene which encodes a guanine quadruplex binding protein, interacts with CDC13 in Saccharomyces cerevisiae.</title>
        <authorList>
            <person name="Hayashi N."/>
            <person name="Murakami S."/>
        </authorList>
    </citation>
    <scope>INTERACTION WITH STM1</scope>
</reference>
<reference key="9">
    <citation type="journal article" date="2003" name="Nature">
        <title>Global analysis of protein expression in yeast.</title>
        <authorList>
            <person name="Ghaemmaghami S."/>
            <person name="Huh W.-K."/>
            <person name="Bower K."/>
            <person name="Howson R.W."/>
            <person name="Belle A."/>
            <person name="Dephoure N."/>
            <person name="O'Shea E.K."/>
            <person name="Weissman J.S."/>
        </authorList>
    </citation>
    <scope>LEVEL OF PROTEIN EXPRESSION [LARGE SCALE ANALYSIS]</scope>
</reference>
<reference key="10">
    <citation type="journal article" date="2007" name="Proc. Natl. Acad. Sci. U.S.A.">
        <title>Analysis of phosphorylation sites on proteins from Saccharomyces cerevisiae by electron transfer dissociation (ETD) mass spectrometry.</title>
        <authorList>
            <person name="Chi A."/>
            <person name="Huttenhower C."/>
            <person name="Geer L.Y."/>
            <person name="Coon J.J."/>
            <person name="Syka J.E.P."/>
            <person name="Bai D.L."/>
            <person name="Shabanowitz J."/>
            <person name="Burke D.J."/>
            <person name="Troyanskaya O.G."/>
            <person name="Hunt D.F."/>
        </authorList>
    </citation>
    <scope>PHOSPHORYLATION [LARGE SCALE ANALYSIS] AT SER-333</scope>
    <scope>IDENTIFICATION BY MASS SPECTROMETRY [LARGE SCALE ANALYSIS]</scope>
</reference>
<reference key="11">
    <citation type="journal article" date="2008" name="Mol. Cell. Proteomics">
        <title>A multidimensional chromatography technology for in-depth phosphoproteome analysis.</title>
        <authorList>
            <person name="Albuquerque C.P."/>
            <person name="Smolka M.B."/>
            <person name="Payne S.H."/>
            <person name="Bafna V."/>
            <person name="Eng J."/>
            <person name="Zhou H."/>
        </authorList>
    </citation>
    <scope>PHOSPHORYLATION [LARGE SCALE ANALYSIS] AT SER-306 AND THR-308</scope>
    <scope>IDENTIFICATION BY MASS SPECTROMETRY [LARGE SCALE ANALYSIS]</scope>
</reference>
<reference key="12">
    <citation type="journal article" date="2002" name="Science">
        <title>Conserved structure for single-stranded telomeric DNA recognition.</title>
        <authorList>
            <person name="Mitton-Fry R.M."/>
            <person name="Anderson E.M."/>
            <person name="Hughes T.R."/>
            <person name="Lundblad V."/>
            <person name="Wuttke D.S."/>
        </authorList>
    </citation>
    <scope>STRUCTURE BY NMR OF DNA-BINDING DOMAIN IN COMPLEX WITH DNA</scope>
</reference>
<reference key="13">
    <citation type="journal article" date="2004" name="J. Mol. Biol.">
        <title>Structural basis for telomeric single-stranded DNA recognition by yeast Cdc13.</title>
        <authorList>
            <person name="Mitton-Fry R.M."/>
            <person name="Anderson E.M."/>
            <person name="Theobald D.L."/>
            <person name="Glustrom L.W."/>
            <person name="Wuttke D.S."/>
        </authorList>
    </citation>
    <scope>STRUCTURE BY NMR OF DNA-BINDING DOMAIN IN COMPLEX WITH DNA</scope>
</reference>
<proteinExistence type="evidence at protein level"/>
<dbReference type="EMBL" id="M76550">
    <property type="protein sequence ID" value="AAA99990.1"/>
    <property type="molecule type" value="Genomic_DNA"/>
</dbReference>
<dbReference type="EMBL" id="Z74269">
    <property type="protein sequence ID" value="CAA98800.1"/>
    <property type="molecule type" value="Genomic_DNA"/>
</dbReference>
<dbReference type="EMBL" id="BK006938">
    <property type="protein sequence ID" value="DAA11644.1"/>
    <property type="molecule type" value="Genomic_DNA"/>
</dbReference>
<dbReference type="PIR" id="S67783">
    <property type="entry name" value="S27421"/>
</dbReference>
<dbReference type="RefSeq" id="NP_010061.1">
    <property type="nucleotide sequence ID" value="NM_001180280.1"/>
</dbReference>
<dbReference type="PDB" id="1KXL">
    <property type="method" value="NMR"/>
    <property type="chains" value="A=497-694"/>
</dbReference>
<dbReference type="PDB" id="1S40">
    <property type="method" value="NMR"/>
    <property type="chains" value="A=497-694"/>
</dbReference>
<dbReference type="PDB" id="3NWS">
    <property type="method" value="X-ray"/>
    <property type="resolution" value="2.50 A"/>
    <property type="chains" value="A/B/C/D=13-227"/>
</dbReference>
<dbReference type="PDB" id="3NWT">
    <property type="method" value="X-ray"/>
    <property type="resolution" value="2.70 A"/>
    <property type="chains" value="A=13-227"/>
</dbReference>
<dbReference type="PDB" id="3OIP">
    <property type="method" value="X-ray"/>
    <property type="resolution" value="2.50 A"/>
    <property type="chains" value="A=12-243"/>
</dbReference>
<dbReference type="PDB" id="3OIQ">
    <property type="method" value="X-ray"/>
    <property type="resolution" value="2.40 A"/>
    <property type="chains" value="A=12-243"/>
</dbReference>
<dbReference type="PDB" id="4HCE">
    <property type="method" value="X-ray"/>
    <property type="resolution" value="2.30 A"/>
    <property type="chains" value="A/B=344-495"/>
</dbReference>
<dbReference type="PDBsum" id="1KXL"/>
<dbReference type="PDBsum" id="1S40"/>
<dbReference type="PDBsum" id="3NWS"/>
<dbReference type="PDBsum" id="3NWT"/>
<dbReference type="PDBsum" id="3OIP"/>
<dbReference type="PDBsum" id="3OIQ"/>
<dbReference type="PDBsum" id="4HCE"/>
<dbReference type="BMRB" id="P32797"/>
<dbReference type="SMR" id="P32797"/>
<dbReference type="BioGRID" id="31825">
    <property type="interactions" value="811"/>
</dbReference>
<dbReference type="ComplexPortal" id="CPX-15">
    <property type="entry name" value="CST complex"/>
</dbReference>
<dbReference type="DIP" id="DIP-1229N"/>
<dbReference type="FunCoup" id="P32797">
    <property type="interactions" value="99"/>
</dbReference>
<dbReference type="IntAct" id="P32797">
    <property type="interactions" value="26"/>
</dbReference>
<dbReference type="MINT" id="P32797"/>
<dbReference type="STRING" id="4932.YDL220C"/>
<dbReference type="iPTMnet" id="P32797"/>
<dbReference type="PaxDb" id="4932-YDL220C"/>
<dbReference type="PeptideAtlas" id="P32797"/>
<dbReference type="EnsemblFungi" id="YDL220C_mRNA">
    <property type="protein sequence ID" value="YDL220C"/>
    <property type="gene ID" value="YDL220C"/>
</dbReference>
<dbReference type="GeneID" id="851306"/>
<dbReference type="KEGG" id="sce:YDL220C"/>
<dbReference type="AGR" id="SGD:S000002379"/>
<dbReference type="SGD" id="S000002379">
    <property type="gene designation" value="CDC13"/>
</dbReference>
<dbReference type="VEuPathDB" id="FungiDB:YDL220C"/>
<dbReference type="eggNOG" id="ENOG502QU50">
    <property type="taxonomic scope" value="Eukaryota"/>
</dbReference>
<dbReference type="HOGENOM" id="CLU_011303_0_0_1"/>
<dbReference type="InParanoid" id="P32797"/>
<dbReference type="OMA" id="ECTFREL"/>
<dbReference type="OrthoDB" id="4067010at2759"/>
<dbReference type="BioCyc" id="YEAST:G3O-29601-MONOMER"/>
<dbReference type="BioGRID-ORCS" id="851306">
    <property type="hits" value="6 hits in 10 CRISPR screens"/>
</dbReference>
<dbReference type="EvolutionaryTrace" id="P32797"/>
<dbReference type="PRO" id="PR:P32797"/>
<dbReference type="Proteomes" id="UP000002311">
    <property type="component" value="Chromosome IV"/>
</dbReference>
<dbReference type="RNAct" id="P32797">
    <property type="molecule type" value="protein"/>
</dbReference>
<dbReference type="GO" id="GO:0000781">
    <property type="term" value="C:chromosome, telomeric region"/>
    <property type="evidence" value="ECO:0000314"/>
    <property type="project" value="SGD"/>
</dbReference>
<dbReference type="GO" id="GO:1990879">
    <property type="term" value="C:CST complex"/>
    <property type="evidence" value="ECO:0000353"/>
    <property type="project" value="SGD"/>
</dbReference>
<dbReference type="GO" id="GO:0000783">
    <property type="term" value="C:nuclear telomere cap complex"/>
    <property type="evidence" value="ECO:0000318"/>
    <property type="project" value="GO_Central"/>
</dbReference>
<dbReference type="GO" id="GO:0098505">
    <property type="term" value="F:G-rich strand telomeric DNA binding"/>
    <property type="evidence" value="ECO:0000318"/>
    <property type="project" value="GO_Central"/>
</dbReference>
<dbReference type="GO" id="GO:0042802">
    <property type="term" value="F:identical protein binding"/>
    <property type="evidence" value="ECO:0000353"/>
    <property type="project" value="IntAct"/>
</dbReference>
<dbReference type="GO" id="GO:0043047">
    <property type="term" value="F:single-stranded telomeric DNA binding"/>
    <property type="evidence" value="ECO:0000314"/>
    <property type="project" value="SGD"/>
</dbReference>
<dbReference type="GO" id="GO:0010521">
    <property type="term" value="F:telomerase inhibitor activity"/>
    <property type="evidence" value="ECO:0000314"/>
    <property type="project" value="SGD"/>
</dbReference>
<dbReference type="GO" id="GO:0061770">
    <property type="term" value="F:translation elongation factor binding"/>
    <property type="evidence" value="ECO:0000314"/>
    <property type="project" value="SGD"/>
</dbReference>
<dbReference type="GO" id="GO:0051301">
    <property type="term" value="P:cell division"/>
    <property type="evidence" value="ECO:0007669"/>
    <property type="project" value="UniProtKB-KW"/>
</dbReference>
<dbReference type="GO" id="GO:0032210">
    <property type="term" value="P:regulation of telomere maintenance via telomerase"/>
    <property type="evidence" value="ECO:0000314"/>
    <property type="project" value="SGD"/>
</dbReference>
<dbReference type="GO" id="GO:0071166">
    <property type="term" value="P:ribonucleoprotein complex localization"/>
    <property type="evidence" value="ECO:0000315"/>
    <property type="project" value="SGD"/>
</dbReference>
<dbReference type="GO" id="GO:0016233">
    <property type="term" value="P:telomere capping"/>
    <property type="evidence" value="ECO:0000315"/>
    <property type="project" value="SGD"/>
</dbReference>
<dbReference type="GO" id="GO:0000723">
    <property type="term" value="P:telomere maintenance"/>
    <property type="evidence" value="ECO:0000315"/>
    <property type="project" value="SGD"/>
</dbReference>
<dbReference type="GO" id="GO:0007004">
    <property type="term" value="P:telomere maintenance via telomerase"/>
    <property type="evidence" value="ECO:0000315"/>
    <property type="project" value="SGD"/>
</dbReference>
<dbReference type="CDD" id="cd03524">
    <property type="entry name" value="RPA2_OBF_family"/>
    <property type="match status" value="1"/>
</dbReference>
<dbReference type="FunFam" id="2.40.50.810:FF:000001">
    <property type="entry name" value="Single-stranded TG1-3 telomere G-tails binding protein"/>
    <property type="match status" value="1"/>
</dbReference>
<dbReference type="Gene3D" id="1.10.10.2380">
    <property type="match status" value="1"/>
</dbReference>
<dbReference type="Gene3D" id="2.40.50.800">
    <property type="match status" value="1"/>
</dbReference>
<dbReference type="Gene3D" id="2.40.50.810">
    <property type="match status" value="1"/>
</dbReference>
<dbReference type="Gene3D" id="2.40.50.860">
    <property type="match status" value="1"/>
</dbReference>
<dbReference type="Gene3D" id="2.40.50.140">
    <property type="entry name" value="Nucleic acid-binding proteins"/>
    <property type="match status" value="1"/>
</dbReference>
<dbReference type="InterPro" id="IPR031749">
    <property type="entry name" value="Cdc13_N"/>
</dbReference>
<dbReference type="InterPro" id="IPR040650">
    <property type="entry name" value="Cdc13_OB2"/>
</dbReference>
<dbReference type="InterPro" id="IPR041028">
    <property type="entry name" value="Cdc13_OB4_dimer"/>
</dbReference>
<dbReference type="InterPro" id="IPR012340">
    <property type="entry name" value="NA-bd_OB-fold"/>
</dbReference>
<dbReference type="InterPro" id="IPR028389">
    <property type="entry name" value="POT1"/>
</dbReference>
<dbReference type="InterPro" id="IPR011564">
    <property type="entry name" value="Telomer_end-bd_POT1/Cdc13"/>
</dbReference>
<dbReference type="PANTHER" id="PTHR14513">
    <property type="entry name" value="PROTECTION OF TELOMERES 1"/>
    <property type="match status" value="1"/>
</dbReference>
<dbReference type="PANTHER" id="PTHR14513:SF0">
    <property type="entry name" value="PROTECTION OF TELOMERES PROTEIN 1"/>
    <property type="match status" value="1"/>
</dbReference>
<dbReference type="Pfam" id="PF16853">
    <property type="entry name" value="CDC13_N"/>
    <property type="match status" value="1"/>
</dbReference>
<dbReference type="Pfam" id="PF18691">
    <property type="entry name" value="Cdc13_OB2"/>
    <property type="match status" value="1"/>
</dbReference>
<dbReference type="Pfam" id="PF18233">
    <property type="entry name" value="Cdc13_OB4_dimer"/>
    <property type="match status" value="1"/>
</dbReference>
<dbReference type="Pfam" id="PF02765">
    <property type="entry name" value="POT1"/>
    <property type="match status" value="1"/>
</dbReference>
<dbReference type="SMART" id="SM00976">
    <property type="entry name" value="Telo_bind"/>
    <property type="match status" value="1"/>
</dbReference>
<dbReference type="SUPFAM" id="SSF50249">
    <property type="entry name" value="Nucleic acid-binding proteins"/>
    <property type="match status" value="1"/>
</dbReference>